<protein>
    <recommendedName>
        <fullName evidence="4">Protein argonaute-2</fullName>
        <shortName evidence="4">Argonaute2</shortName>
        <shortName>mAgo2</shortName>
        <ecNumber evidence="4">3.1.26.n2</ecNumber>
    </recommendedName>
    <alternativeName>
        <fullName>Argonaute RISC catalytic component 2</fullName>
    </alternativeName>
    <alternativeName>
        <fullName evidence="4">Eukaryotic translation initiation factor 2C 2</fullName>
        <shortName evidence="4">eIF-2C 2</shortName>
        <shortName evidence="4">eIF2C 2</shortName>
    </alternativeName>
    <alternativeName>
        <fullName>Piwi/argonaute family protein meIF2C2</fullName>
    </alternativeName>
    <alternativeName>
        <fullName evidence="4">Protein slicer</fullName>
    </alternativeName>
</protein>
<proteinExistence type="evidence at protein level"/>
<feature type="chain" id="PRO_0000194058" description="Protein argonaute-2">
    <location>
        <begin position="1"/>
        <end position="860"/>
    </location>
</feature>
<feature type="domain" description="PAZ" evidence="5">
    <location>
        <begin position="230"/>
        <end position="349"/>
    </location>
</feature>
<feature type="domain" description="Piwi" evidence="4">
    <location>
        <begin position="518"/>
        <end position="819"/>
    </location>
</feature>
<feature type="region of interest" description="Interaction with guide RNA" evidence="1">
    <location>
        <begin position="312"/>
        <end position="317"/>
    </location>
</feature>
<feature type="region of interest" description="Interaction with guide RNA" evidence="1">
    <location>
        <begin position="525"/>
        <end position="567"/>
    </location>
</feature>
<feature type="region of interest" description="Interaction with GW182 family members" evidence="3">
    <location>
        <begin position="588"/>
        <end position="591"/>
    </location>
</feature>
<feature type="region of interest" description="Interaction with GW182 family members" evidence="3">
    <location>
        <begin position="651"/>
        <end position="661"/>
    </location>
</feature>
<feature type="region of interest" description="Interaction with guide RNA" evidence="1">
    <location>
        <begin position="710"/>
        <end position="711"/>
    </location>
</feature>
<feature type="region of interest" description="Interaction with guide RNA" evidence="1">
    <location>
        <begin position="754"/>
        <end position="762"/>
    </location>
</feature>
<feature type="region of interest" description="Interaction with guide RNA" evidence="1">
    <location>
        <begin position="791"/>
        <end position="813"/>
    </location>
</feature>
<feature type="binding site" evidence="4">
    <location>
        <position position="598"/>
    </location>
    <ligand>
        <name>a divalent metal cation</name>
        <dbReference type="ChEBI" id="CHEBI:60240"/>
    </ligand>
</feature>
<feature type="binding site" evidence="4">
    <location>
        <position position="670"/>
    </location>
    <ligand>
        <name>a divalent metal cation</name>
        <dbReference type="ChEBI" id="CHEBI:60240"/>
    </ligand>
</feature>
<feature type="binding site" evidence="4">
    <location>
        <position position="808"/>
    </location>
    <ligand>
        <name>a divalent metal cation</name>
        <dbReference type="ChEBI" id="CHEBI:60240"/>
    </ligand>
</feature>
<feature type="modified residue" description="3'-nitrotyrosine" evidence="17">
    <location>
        <position position="2"/>
    </location>
</feature>
<feature type="modified residue" description="Phosphoserine" evidence="2">
    <location>
        <position position="388"/>
    </location>
</feature>
<feature type="modified residue" description="4-hydroxyproline" evidence="4">
    <location>
        <position position="701"/>
    </location>
</feature>
<feature type="modified residue" description="Phosphoserine" evidence="2">
    <location>
        <position position="825"/>
    </location>
</feature>
<feature type="modified residue" description="Phosphoserine" evidence="2">
    <location>
        <position position="829"/>
    </location>
</feature>
<feature type="modified residue" description="Phosphoserine" evidence="2">
    <location>
        <position position="832"/>
    </location>
</feature>
<feature type="modified residue" description="Phosphoserine" evidence="2">
    <location>
        <position position="835"/>
    </location>
</feature>
<feature type="sequence conflict" description="In Ref. 2; AAH96465." evidence="16" ref="2">
    <original>E</original>
    <variation>G</variation>
    <location>
        <position position="65"/>
    </location>
</feature>
<feature type="sequence conflict" description="In Ref. 1; BAC15767." evidence="16" ref="1">
    <original>C</original>
    <variation>R</variation>
    <location>
        <position position="67"/>
    </location>
</feature>
<feature type="sequence conflict" description="In Ref. 1; BAC15767." evidence="16" ref="1">
    <original>F</original>
    <variation>L</variation>
    <location>
        <position position="129"/>
    </location>
</feature>
<feature type="sequence conflict" description="In Ref. 1; BAC15767." evidence="16" ref="1">
    <original>N</original>
    <variation>D</variation>
    <location>
        <position position="360"/>
    </location>
</feature>
<feature type="sequence conflict" description="In Ref. 2; AAH96465." evidence="16" ref="2">
    <original>N</original>
    <variation>D</variation>
    <location>
        <position position="563"/>
    </location>
</feature>
<feature type="sequence conflict" description="In Ref. 2; AAH96465." evidence="16" ref="2">
    <original>R</original>
    <variation>P</variation>
    <location>
        <position position="711"/>
    </location>
</feature>
<feature type="sequence conflict" description="In Ref. 1; BAC15767." evidence="16" ref="1">
    <original>S</original>
    <variation>G</variation>
    <location>
        <position position="761"/>
    </location>
</feature>
<gene>
    <name type="primary">Ago2</name>
    <name type="synonym">Eif2c2</name>
    <name type="synonym">Kiaa4215</name>
</gene>
<comment type="function">
    <text evidence="4 6 8 9">Required for RNA-mediated gene silencing (RNAi) by the RNA-induced silencing complex (RISC). The 'minimal RISC' appears to include AGO2 bound to a short guide RNA such as a microRNA (miRNA) or short interfering RNA (siRNA). These guide RNAs direct RISC to complementary mRNAs that are targets for RISC-mediated gene silencing. The precise mechanism of gene silencing depends on the degree of complementarity between the miRNA or siRNA and its target. Binding of RISC to a perfectly complementary mRNA generally results in silencing due to endonucleolytic cleavage of the mRNA specifically by AGO2. Binding of RISC to a partially complementary mRNA results in silencing through inhibition of translation, and this is independent of endonuclease activity. May inhibit translation initiation by binding to the 7-methylguanosine cap, thereby preventing the recruitment of the translation initiation factor eIF4-E. May also inhibit translation initiation via interaction with EIF6, which itself binds to the 60S ribosomal subunit and prevents its association with the 40S ribosomal subunit. The inhibition of translational initiation leads to the accumulation of the affected mRNA in cytoplasmic processing bodies (P-bodies), where mRNA degradation may subsequently occur. In some cases RISC-mediated translational repression is also observed for miRNAs that perfectly match the 3' untranslated region (3'-UTR). Can also up-regulate the translation of specific mRNAs under certain growth conditions. Binds to the AU element of the 3'-UTR of the TNF (TNF-alpha) mRNA and up-regulates translation under conditions of serum starvation. Also required for transcriptional gene silencing (TGS), in which short RNAs known as antigene RNAs or agRNAs direct the transcriptional repression of complementary promoter regions. Regulates lymphoid and erythroid development and function, and this is independent of endonuclease activity.</text>
</comment>
<comment type="catalytic activity">
    <reaction evidence="4">
        <text>Endonucleolytic cleavage to 5'-phosphomonoester.</text>
        <dbReference type="EC" id="3.1.26.n2"/>
    </reaction>
</comment>
<comment type="cofactor">
    <cofactor evidence="1">
        <name>Mg(2+)</name>
        <dbReference type="ChEBI" id="CHEBI:18420"/>
    </cofactor>
    <cofactor evidence="1">
        <name>Mn(2+)</name>
        <dbReference type="ChEBI" id="CHEBI:29035"/>
    </cofactor>
</comment>
<comment type="subunit">
    <text evidence="2 4 7 10 11 12 13 14 15">Interacts with DICER1 through its Piwi domain and with TARBP2 during assembly of the RNA-induced silencing complex (RISC). Together, DICER1, AGO2 and TARBP2 constitute the trimeric RISC loading complex (RLC), or micro-RNA (miRNA) loading complex (miRLC). Within the RLC/miRLC, DICER1 and TARBP2 are required to process precursor miRNAs (pre-miRNAs) to mature miRNAs and then load them onto AGO2. AGO2 bound to the mature miRNA constitutes the minimal RISC and may subsequently dissociate from DICER1 and TARBP2. Note however that the term RISC has also been used to describe the trimeric RLC/miRLC. The formation of RISC complexes containing siRNAs rather than miRNAs appears to occur independently of DICER1 (PubMed:16357216). Interacts with AGO1. Also interacts with DDB1, DDX5, DDX6, DDX20, DHX30, DHX36, DDX47, DHX9, ELAVL, FXR1, GEMIN4, HNRNPF, IGF2BP1, ILF3, IMP8, MATR3, PABPC1, PRMT5, P4HA1, P4HB, RBM4, SART3, TNRC6A, TNRC6B, UPF1 and YBX1. Interacts with the P-body components DCP1A and XRN1. Associates with polysomes and messenger ribonucleoproteins (mNRPs). Interacts with RBM4; the interaction is modulated under stress-induced conditions, occurs under both cell proliferation and differentiation conditions and in an RNA- and phosphorylation-independent manner. Interacts with LIMD1, WTIP and AJUBA (By similarity). Interacts with TRIM71 (PubMed:19898466, PubMed:22508726, PubMed:22735451). Interacts with APOBEC3G in an RNA-dependent manner. Interacts with APOBEC3A, APOBEC3C, APOBEC3F and APOBEC3H. Interacts with DICER1, TARBP2, EIF6, MOV10 and RPL7A (60S ribosome subunit); they form a large RNA-induced silencing complex (RISC). Interacts with FMR1. Interacts with ZFP36 (By similarity). Interacts with RC3H1; the interaction is RNA independent (PubMed:25697406). Interacts with ARB2A (PubMed:29311329). Found in a complex composed of AGO2, CHD7 and ARB2A (PubMed:29311329). Interacts with SND1 and SYT11 (PubMed:24882364). Interacts with CLNK (PubMed:26009488). Interacts with GARRE1 (By similarity). Interacts with GRB2; this interaction is important for the formation of a ternary complex containing GRB2, AGO2 and DICER1 (By similarity).</text>
</comment>
<comment type="interaction">
    <interactant intactId="EBI-528299">
        <id>Q8CJG0</id>
    </interactant>
    <interactant intactId="EBI-2366263">
        <id>Q4VGL6</id>
        <label>Rc3h1</label>
    </interactant>
    <organismsDiffer>false</organismsDiffer>
    <experiments>2</experiments>
</comment>
<comment type="interaction">
    <interactant intactId="EBI-528299">
        <id>Q8CJG0</id>
    </interactant>
    <interactant intactId="EBI-395506">
        <id>Q9UPY3</id>
        <label>DICER1</label>
    </interactant>
    <organismsDiffer>true</organismsDiffer>
    <experiments>2</experiments>
</comment>
<comment type="interaction">
    <interactant intactId="EBI-528299">
        <id>Q8CJG0</id>
    </interactant>
    <interactant intactId="EBI-977302">
        <id>P04156</id>
        <label>PRNP</label>
    </interactant>
    <organismsDiffer>true</organismsDiffer>
    <experiments>2</experiments>
</comment>
<comment type="interaction">
    <interactant intactId="EBI-528299">
        <id>Q8CJG0</id>
    </interactant>
    <interactant intactId="EBI-986426">
        <id>P04273</id>
        <label>PRNP</label>
    </interactant>
    <organismsDiffer>true</organismsDiffer>
    <experiments>2</experiments>
</comment>
<comment type="interaction">
    <interactant intactId="EBI-528299">
        <id>Q8CJG0</id>
    </interactant>
    <interactant intactId="EBI-6507625">
        <id>Q9HCJ0</id>
        <label>TNRC6C</label>
    </interactant>
    <organismsDiffer>true</organismsDiffer>
    <experiments>3</experiments>
</comment>
<comment type="subcellular location">
    <subcellularLocation>
        <location evidence="4">Cytoplasm</location>
        <location evidence="4">P-body</location>
    </subcellularLocation>
    <subcellularLocation>
        <location evidence="4">Nucleus</location>
    </subcellularLocation>
    <text evidence="4">Translational repression of mRNAs results in their recruitment to P-bodies. Translocation to the nucleus requires IMP8.</text>
</comment>
<comment type="tissue specificity">
    <text evidence="6">Ubiquitous expression in 9.5 day embryos with highest levels in forebrain, heart, limb buds, and branchial arches.</text>
</comment>
<comment type="domain">
    <text evidence="4">The Piwi domain may perform RNA cleavage by a mechanism similar to that of RNase H. However, while RNase H utilizes a triad of Asp-Asp-Glu (DDE) for metal ion coordination, this protein appears to utilize a triad of Asp-Asp-His (DDH).</text>
</comment>
<comment type="PTM">
    <text evidence="4">Hydroxylated. 4-hydroxylation appears to enhance protein stability but is not required for miRNA-binding or endonuclease activity.</text>
</comment>
<comment type="PTM">
    <text evidence="2">Ubiquitinated on surface-exposed lysines by a SCF-like E3 ubiquitin-protein ligase complex containing ZSWIM8 during target-directed microRNA degradation (TDMD), a process that mediates degradation of microRNAs (miRNAs). Ubiquitination by the SCF-like E3 ubiquitin-protein ligase complex containing ZSWIM8 leads to its subsequent degradation, thereby exposing miRNAs for degradation. ZSWIM8 recognizes and binds AGO2 when it is engaged with a TDMD target.</text>
</comment>
<comment type="PTM">
    <text evidence="2">Phosphorylation at Ser-388 by AKT3; leads to up-regulate translational repression of microRNA target and down-regulate endonucleolytic cleavage.</text>
</comment>
<comment type="PTM">
    <text evidence="2">A phosphorylation cycle of C-terminal serine cluster (Ser-825-Ser-835) regulates the release of target mRNAs. Target-binding leads to phosphorylation of these residues by CSNK1A1, which reduces the affinity of AGO2 for mRNA and enables target release. The ANKRD52-PPP6C phosphatase complex dephosphorylates the residues, which primes AGO2 for binding a new target.</text>
</comment>
<comment type="disruption phenotype">
    <text evidence="6">Embryonic death with a strong defect in neural tube closure and apparent cardiac failure.</text>
</comment>
<comment type="similarity">
    <text evidence="4">Belongs to the argonaute family. Ago subfamily.</text>
</comment>
<comment type="sequence caution" evidence="16">
    <conflict type="erroneous initiation">
        <sequence resource="EMBL-CDS" id="AAH96465"/>
    </conflict>
    <text>Extended N-terminus.</text>
</comment>
<reference key="1">
    <citation type="journal article" date="2003" name="Curr. Biol.">
        <title>Short-interfering-RNA-mediated gene silencing in mammalian cells requires Dicer and eIF2C translation initiation factors.</title>
        <authorList>
            <person name="Doi N."/>
            <person name="Zenno S."/>
            <person name="Ueda R."/>
            <person name="Ohki-Hamazaki H."/>
            <person name="Ui-Tei K."/>
            <person name="Saigo K."/>
        </authorList>
    </citation>
    <scope>NUCLEOTIDE SEQUENCE [MRNA]</scope>
</reference>
<reference key="2">
    <citation type="journal article" date="2004" name="Genome Res.">
        <title>The status, quality, and expansion of the NIH full-length cDNA project: the Mammalian Gene Collection (MGC).</title>
        <authorList>
            <consortium name="The MGC Project Team"/>
        </authorList>
    </citation>
    <scope>NUCLEOTIDE SEQUENCE [LARGE SCALE MRNA]</scope>
    <source>
        <strain>B5/EGFP</strain>
        <tissue>Trophoblast stem cell</tissue>
    </source>
</reference>
<reference key="3">
    <citation type="submission" date="2005-02" db="EMBL/GenBank/DDBJ databases">
        <title>Prediction of the coding sequences of mouse homologues of KIAA gene. The complete nucleotide sequences of mouse KIAA-homologous cDNAs identified by screening of terminal sequences of cDNA clones randomly sampled from size-fractionated libraries.</title>
        <authorList>
            <person name="Okazaki N."/>
            <person name="Kikuno R.F."/>
            <person name="Ohara R."/>
            <person name="Inamoto S."/>
            <person name="Nagase T."/>
            <person name="Ohara O."/>
            <person name="Koga H."/>
        </authorList>
    </citation>
    <scope>NUCLEOTIDE SEQUENCE [LARGE SCALE MRNA] OF 158-860</scope>
    <source>
        <tissue>Embryonic tail</tissue>
    </source>
</reference>
<reference key="4">
    <citation type="journal article" date="2004" name="Science">
        <title>Argonaute2 is the catalytic engine of mammalian RNAi.</title>
        <authorList>
            <person name="Liu J."/>
            <person name="Carmell M.A."/>
            <person name="Rivas F.V."/>
            <person name="Marsden C.G."/>
            <person name="Thomson J.M."/>
            <person name="Song J.-J."/>
            <person name="Hammond S.M."/>
            <person name="Joshua-Tor L."/>
            <person name="Hannon G.J."/>
        </authorList>
    </citation>
    <scope>FUNCTION</scope>
    <scope>TISSUE SPECIFICITY</scope>
    <scope>DISRUPTION PHENOTYPE</scope>
</reference>
<reference key="5">
    <citation type="journal article" date="2005" name="Genes Dev.">
        <title>A human, ATP-independent, RISC assembly machine fueled by pre-miRNA.</title>
        <authorList>
            <person name="Maniataki E."/>
            <person name="Mourelatos Z."/>
        </authorList>
    </citation>
    <scope>INTERACTION WITH DICER1 AND TARBP2</scope>
</reference>
<reference key="6">
    <citation type="journal article" date="2006" name="Biochemistry">
        <title>Endogenously nitrated proteins in mouse brain: links to neurodegenerative disease.</title>
        <authorList>
            <person name="Sacksteder C.A."/>
            <person name="Qian W.-J."/>
            <person name="Knyushko T.V."/>
            <person name="Wang H."/>
            <person name="Chin M.H."/>
            <person name="Lacan G."/>
            <person name="Melega W.P."/>
            <person name="Camp D.G. II"/>
            <person name="Smith R.D."/>
            <person name="Smith D.J."/>
            <person name="Squier T.C."/>
            <person name="Bigelow D.J."/>
        </authorList>
    </citation>
    <scope>NITRATION [LARGE SCALE ANALYSIS] AT TYR-2</scope>
    <scope>IDENTIFICATION BY MASS SPECTROMETRY [LARGE SCALE ANALYSIS]</scope>
    <source>
        <tissue>Brain</tissue>
    </source>
</reference>
<reference key="7">
    <citation type="journal article" date="2007" name="Genes Dev.">
        <title>A Slicer-independent role for Argonaute 2 in hematopoiesis and the microRNA pathway.</title>
        <authorList>
            <person name="O'Carroll D."/>
            <person name="Mecklenbrauker I."/>
            <person name="Das P.P."/>
            <person name="Santana A."/>
            <person name="Koenig U."/>
            <person name="Enright A.J."/>
            <person name="Miska E.A."/>
            <person name="Tarakhovsky A."/>
        </authorList>
    </citation>
    <scope>FUNCTION</scope>
</reference>
<reference key="8">
    <citation type="journal article" date="2009" name="Genes Dev.">
        <title>Essential and overlapping functions for mammalian Argonautes in microRNA silencing.</title>
        <authorList>
            <person name="Su H."/>
            <person name="Trombly M.I."/>
            <person name="Chen J."/>
            <person name="Wang X."/>
        </authorList>
    </citation>
    <scope>FUNCTION</scope>
</reference>
<reference key="9">
    <citation type="journal article" date="2009" name="Nat. Cell Biol.">
        <title>The let-7 target gene mouse lin-41 is a stem cell specific E3 ubiquitin ligase for the miRNA pathway protein Ago2.</title>
        <authorList>
            <person name="Rybak A."/>
            <person name="Fuchs H."/>
            <person name="Hadian K."/>
            <person name="Smirnova L."/>
            <person name="Wulczyn E.A."/>
            <person name="Michel G."/>
            <person name="Nitsch R."/>
            <person name="Krappmann D."/>
            <person name="Wulczyn F.G."/>
        </authorList>
    </citation>
    <scope>INTERACTION WITH TRIM71</scope>
</reference>
<reference key="10">
    <citation type="journal article" date="2010" name="Cell">
        <title>A tissue-specific atlas of mouse protein phosphorylation and expression.</title>
        <authorList>
            <person name="Huttlin E.L."/>
            <person name="Jedrychowski M.P."/>
            <person name="Elias J.E."/>
            <person name="Goswami T."/>
            <person name="Rad R."/>
            <person name="Beausoleil S.A."/>
            <person name="Villen J."/>
            <person name="Haas W."/>
            <person name="Sowa M.E."/>
            <person name="Gygi S.P."/>
        </authorList>
    </citation>
    <scope>IDENTIFICATION BY MASS SPECTROMETRY [LARGE SCALE ANALYSIS]</scope>
    <source>
        <tissue>Brain</tissue>
        <tissue>Brown adipose tissue</tissue>
        <tissue>Heart</tissue>
        <tissue>Kidney</tissue>
        <tissue>Liver</tissue>
        <tissue>Lung</tissue>
        <tissue>Pancreas</tissue>
        <tissue>Spleen</tissue>
    </source>
</reference>
<reference key="11">
    <citation type="journal article" date="2012" name="Genes Dev.">
        <title>The ubiquitin ligase mLin41 temporally promotes neural progenitor cell maintenance through FGF signaling.</title>
        <authorList>
            <person name="Chen J."/>
            <person name="Lai F."/>
            <person name="Niswander L."/>
        </authorList>
    </citation>
    <scope>INTERACTION WITH TRIM71</scope>
</reference>
<reference key="12">
    <citation type="journal article" date="2012" name="Nat. Commun.">
        <title>Trim71 cooperates with microRNAs to repress Cdkn1a expression and promote embryonic stem cell proliferation.</title>
        <authorList>
            <person name="Chang H.M."/>
            <person name="Martinez N.J."/>
            <person name="Thornton J.E."/>
            <person name="Hagan J.P."/>
            <person name="Nguyen K.D."/>
            <person name="Gregory R.I."/>
        </authorList>
    </citation>
    <scope>INTERACTION WITH TRIM71</scope>
</reference>
<reference key="13">
    <citation type="journal article" date="2014" name="FEBS Lett.">
        <title>Synaptotagmin 11 interacts with components of the RNA-induced silencing complex RISC in clonal pancreatic beta-cells.</title>
        <authorList>
            <person name="Milochau A."/>
            <person name="Lagree V."/>
            <person name="Benassy M.N."/>
            <person name="Chaignepain S."/>
            <person name="Papin J."/>
            <person name="Garcia-Arcos I."/>
            <person name="Lajoix A."/>
            <person name="Monterrat C."/>
            <person name="Coudert L."/>
            <person name="Schmitter J.M."/>
            <person name="Ochoa B."/>
            <person name="Lang J."/>
        </authorList>
    </citation>
    <scope>INTERACTION WITH SND1 AND SYT11</scope>
</reference>
<reference key="14">
    <citation type="journal article" date="2015" name="Biochem. Biophys. Res. Commun.">
        <title>Clnk plays a role in TNF-alpha-induced cell death in murine fibrosarcoma cell line L929.</title>
        <authorList>
            <person name="Xu M."/>
            <person name="Cai C."/>
            <person name="Sun X."/>
            <person name="Chen W."/>
            <person name="Li Q."/>
            <person name="Zhou H."/>
        </authorList>
    </citation>
    <scope>INTERACTION WITH CLNK</scope>
</reference>
<reference key="15">
    <citation type="journal article" date="2015" name="Nat. Commun.">
        <title>Roquin binds microRNA-146a and Argonaute2 to regulate microRNA homeostasis.</title>
        <authorList>
            <person name="Srivastava M."/>
            <person name="Duan G."/>
            <person name="Kershaw N.J."/>
            <person name="Athanasopoulos V."/>
            <person name="Yeo J.H."/>
            <person name="Ose T."/>
            <person name="Hu D."/>
            <person name="Brown S.H."/>
            <person name="Jergic S."/>
            <person name="Patel H.R."/>
            <person name="Pratama A."/>
            <person name="Richards S."/>
            <person name="Verma A."/>
            <person name="Jones E.Y."/>
            <person name="Heissmeyer V."/>
            <person name="Preiss T."/>
            <person name="Dixon N.E."/>
            <person name="Chong M.M."/>
            <person name="Babon J.J."/>
            <person name="Vinuesa C.G."/>
        </authorList>
    </citation>
    <scope>INTERACTION WITH RC3H1</scope>
</reference>
<reference key="16">
    <citation type="journal article" date="2018" name="Proc. Natl. Acad. Sci. U.S.A.">
        <title>Dysregulation of cotranscriptional alternative splicing underlies CHARGE syndrome.</title>
        <authorList>
            <person name="Belanger C."/>
            <person name="Berube-Simard F.A."/>
            <person name="Leduc E."/>
            <person name="Bernas G."/>
            <person name="Campeau P.M."/>
            <person name="Lalani S.R."/>
            <person name="Martin D.M."/>
            <person name="Bielas S."/>
            <person name="Moccia A."/>
            <person name="Srivastava A."/>
            <person name="Silversides D.W."/>
            <person name="Pilon N."/>
        </authorList>
    </citation>
    <scope>INTERACTION WITH ARB2A</scope>
    <scope>IDENTIFICATION IN A COMPLEX WITH ARB2A; AGO2 AND CHD7</scope>
</reference>
<sequence length="860" mass="97304">MYSGAGPVLASPAPTTSPIPGYAFKPPPRPDFGTTGRTIKLQANFFEMDIPKIDIYHYELDIKPEKCPRRVNREIVEHMVQHFKTQIFGDRKPVFDGRKNLYTAMPLPIGRDKVELEVTLPGEGKDRIFKVSIKWVSCVSLQALHDALSGRLPSVPFETIQALDVVMRHLPSMRYTPVGRSFFTASEGCSNPLGGGREVWFGFHQSVRPSLWKMMLNIDVSATAFYKAQPVIEFVCEVLDFKSIEEQQKPLTDSQRVKFTKEIKGLKVEITHCGQMKRKYRVCNVTRRPASHQTFPLQQESGQTVECTVAQYFKDRHKLVLRYPHLPCLQVGQEQKHTYLPLEVCNIVAGQRCIKKLTDNQTSTMIRATARSAPDRQEEISKLMRSASFNTDPYVREFGIMVKDEMTDVTGRVLQPPSILYGGRNKAIATPVQGVWDMRNKQFHTGIEIKVWAIACFAPQRQCTEVHLKSFTEQLRKISRDAGMPIQGQPCFCKYAQGADSVEPMFRHLKNTYAGLQLVVVILPGKTPVYAEVKRVGDTVLGMATQCVQMKNVQRTTPQTLSNLCLKINVKLGGVNNILLPQGRPPVFQQPVIFLGADVTHPPAGDGKKPSIAAVVGSMDAHPNRYCATVRVQQHRQEIIQDLAAMVRELLIQFYKSTRFKPTRIIFYRDGVSEGQFQQVLHHELLAIREACIKLEKDYQPGITFIVVQKRHHTRLFCTDKNERVGKSGNIPAGTTVDTKITHPTEFDFYLCSHAGIQGTSRPSHYHVLWDDNRFSSDELQILTYQLCHTYVRCTRSVSIPAPAYYAHLVAFRARYHLVDKEHDSAEGSHTSGQSNGRDHQALAKAVQVHQDTLRTMYFA</sequence>
<keyword id="KW-0963">Cytoplasm</keyword>
<keyword id="KW-0217">Developmental protein</keyword>
<keyword id="KW-0221">Differentiation</keyword>
<keyword id="KW-0255">Endonuclease</keyword>
<keyword id="KW-0378">Hydrolase</keyword>
<keyword id="KW-0379">Hydroxylation</keyword>
<keyword id="KW-0460">Magnesium</keyword>
<keyword id="KW-0464">Manganese</keyword>
<keyword id="KW-0479">Metal-binding</keyword>
<keyword id="KW-0944">Nitration</keyword>
<keyword id="KW-0540">Nuclease</keyword>
<keyword id="KW-0539">Nucleus</keyword>
<keyword id="KW-0597">Phosphoprotein</keyword>
<keyword id="KW-1185">Reference proteome</keyword>
<keyword id="KW-0678">Repressor</keyword>
<keyword id="KW-0687">Ribonucleoprotein</keyword>
<keyword id="KW-0694">RNA-binding</keyword>
<keyword id="KW-0943">RNA-mediated gene silencing</keyword>
<keyword id="KW-0804">Transcription</keyword>
<keyword id="KW-0805">Transcription regulation</keyword>
<keyword id="KW-0810">Translation regulation</keyword>
<keyword id="KW-0832">Ubl conjugation</keyword>
<accession>Q8CJG0</accession>
<accession>A1A563</accession>
<accession>Q4VAB3</accession>
<accession>Q571J6</accession>
<organism>
    <name type="scientific">Mus musculus</name>
    <name type="common">Mouse</name>
    <dbReference type="NCBI Taxonomy" id="10090"/>
    <lineage>
        <taxon>Eukaryota</taxon>
        <taxon>Metazoa</taxon>
        <taxon>Chordata</taxon>
        <taxon>Craniata</taxon>
        <taxon>Vertebrata</taxon>
        <taxon>Euteleostomi</taxon>
        <taxon>Mammalia</taxon>
        <taxon>Eutheria</taxon>
        <taxon>Euarchontoglires</taxon>
        <taxon>Glires</taxon>
        <taxon>Rodentia</taxon>
        <taxon>Myomorpha</taxon>
        <taxon>Muroidea</taxon>
        <taxon>Muridae</taxon>
        <taxon>Murinae</taxon>
        <taxon>Mus</taxon>
        <taxon>Mus</taxon>
    </lineage>
</organism>
<name>AGO2_MOUSE</name>
<dbReference type="EC" id="3.1.26.n2" evidence="4"/>
<dbReference type="EMBL" id="AB081472">
    <property type="protein sequence ID" value="BAC15767.1"/>
    <property type="molecule type" value="mRNA"/>
</dbReference>
<dbReference type="EMBL" id="BC096465">
    <property type="protein sequence ID" value="AAH96465.1"/>
    <property type="status" value="ALT_INIT"/>
    <property type="molecule type" value="mRNA"/>
</dbReference>
<dbReference type="EMBL" id="BC128379">
    <property type="protein sequence ID" value="AAI28380.1"/>
    <property type="molecule type" value="mRNA"/>
</dbReference>
<dbReference type="EMBL" id="BC129922">
    <property type="protein sequence ID" value="AAI29923.1"/>
    <property type="molecule type" value="mRNA"/>
</dbReference>
<dbReference type="EMBL" id="AK220193">
    <property type="protein sequence ID" value="BAD90378.1"/>
    <property type="molecule type" value="mRNA"/>
</dbReference>
<dbReference type="CCDS" id="CCDS37098.1"/>
<dbReference type="RefSeq" id="NP_694818.3">
    <property type="nucleotide sequence ID" value="NM_153178.4"/>
</dbReference>
<dbReference type="SMR" id="Q8CJG0"/>
<dbReference type="BioGRID" id="232092">
    <property type="interactions" value="62"/>
</dbReference>
<dbReference type="DIP" id="DIP-35014N"/>
<dbReference type="FunCoup" id="Q8CJG0">
    <property type="interactions" value="2555"/>
</dbReference>
<dbReference type="IntAct" id="Q8CJG0">
    <property type="interactions" value="57"/>
</dbReference>
<dbReference type="MINT" id="Q8CJG0"/>
<dbReference type="STRING" id="10090.ENSMUSP00000042207"/>
<dbReference type="GlyGen" id="Q8CJG0">
    <property type="glycosylation" value="2 sites, 1 N-linked glycan (1 site), 1 O-linked glycan (1 site)"/>
</dbReference>
<dbReference type="iPTMnet" id="Q8CJG0"/>
<dbReference type="PhosphoSitePlus" id="Q8CJG0"/>
<dbReference type="SwissPalm" id="Q8CJG0"/>
<dbReference type="jPOST" id="Q8CJG0"/>
<dbReference type="PaxDb" id="10090-ENSMUSP00000042207"/>
<dbReference type="PeptideAtlas" id="Q8CJG0"/>
<dbReference type="ProteomicsDB" id="285770"/>
<dbReference type="Pumba" id="Q8CJG0"/>
<dbReference type="Antibodypedia" id="27626">
    <property type="antibodies" value="351 antibodies from 40 providers"/>
</dbReference>
<dbReference type="DNASU" id="239528"/>
<dbReference type="Ensembl" id="ENSMUST00000044113.12">
    <property type="protein sequence ID" value="ENSMUSP00000042207.10"/>
    <property type="gene ID" value="ENSMUSG00000036698.12"/>
</dbReference>
<dbReference type="GeneID" id="239528"/>
<dbReference type="KEGG" id="mmu:239528"/>
<dbReference type="UCSC" id="uc007wbu.2">
    <property type="organism name" value="mouse"/>
</dbReference>
<dbReference type="AGR" id="MGI:2446632"/>
<dbReference type="CTD" id="27161"/>
<dbReference type="MGI" id="MGI:2446632">
    <property type="gene designation" value="Ago2"/>
</dbReference>
<dbReference type="VEuPathDB" id="HostDB:ENSMUSG00000036698"/>
<dbReference type="eggNOG" id="KOG1041">
    <property type="taxonomic scope" value="Eukaryota"/>
</dbReference>
<dbReference type="GeneTree" id="ENSGT00940000155239"/>
<dbReference type="HOGENOM" id="CLU_004544_4_3_1"/>
<dbReference type="InParanoid" id="Q8CJG0"/>
<dbReference type="OMA" id="CFAQQQH"/>
<dbReference type="OrthoDB" id="10252740at2759"/>
<dbReference type="PhylomeDB" id="Q8CJG0"/>
<dbReference type="TreeFam" id="TF101510"/>
<dbReference type="Reactome" id="R-MMU-203927">
    <property type="pathway name" value="MicroRNA (miRNA) biogenesis"/>
</dbReference>
<dbReference type="Reactome" id="R-MMU-426486">
    <property type="pathway name" value="Small interfering RNA (siRNA) biogenesis"/>
</dbReference>
<dbReference type="Reactome" id="R-MMU-426496">
    <property type="pathway name" value="Post-transcriptional silencing by small RNAs"/>
</dbReference>
<dbReference type="Reactome" id="R-MMU-5578749">
    <property type="pathway name" value="Transcriptional regulation by small RNAs"/>
</dbReference>
<dbReference type="BioGRID-ORCS" id="239528">
    <property type="hits" value="18 hits in 78 CRISPR screens"/>
</dbReference>
<dbReference type="CD-CODE" id="CE726F99">
    <property type="entry name" value="Postsynaptic density"/>
</dbReference>
<dbReference type="ChiTaRS" id="Ago2">
    <property type="organism name" value="mouse"/>
</dbReference>
<dbReference type="PRO" id="PR:Q8CJG0"/>
<dbReference type="Proteomes" id="UP000000589">
    <property type="component" value="Chromosome 15"/>
</dbReference>
<dbReference type="RNAct" id="Q8CJG0">
    <property type="molecule type" value="protein"/>
</dbReference>
<dbReference type="Bgee" id="ENSMUSG00000036698">
    <property type="expression patterns" value="Expressed in ascending aorta and 222 other cell types or tissues"/>
</dbReference>
<dbReference type="GO" id="GO:0005737">
    <property type="term" value="C:cytoplasm"/>
    <property type="evidence" value="ECO:0000250"/>
    <property type="project" value="UniProtKB"/>
</dbReference>
<dbReference type="GO" id="GO:0005829">
    <property type="term" value="C:cytosol"/>
    <property type="evidence" value="ECO:0000314"/>
    <property type="project" value="MGI"/>
</dbReference>
<dbReference type="GO" id="GO:0030425">
    <property type="term" value="C:dendrite"/>
    <property type="evidence" value="ECO:0000314"/>
    <property type="project" value="MGI"/>
</dbReference>
<dbReference type="GO" id="GO:0070062">
    <property type="term" value="C:extracellular exosome"/>
    <property type="evidence" value="ECO:0007669"/>
    <property type="project" value="Ensembl"/>
</dbReference>
<dbReference type="GO" id="GO:0098978">
    <property type="term" value="C:glutamatergic synapse"/>
    <property type="evidence" value="ECO:0007669"/>
    <property type="project" value="Ensembl"/>
</dbReference>
<dbReference type="GO" id="GO:0005634">
    <property type="term" value="C:nucleus"/>
    <property type="evidence" value="ECO:0000314"/>
    <property type="project" value="MGI"/>
</dbReference>
<dbReference type="GO" id="GO:0000932">
    <property type="term" value="C:P-body"/>
    <property type="evidence" value="ECO:0000314"/>
    <property type="project" value="MGI"/>
</dbReference>
<dbReference type="GO" id="GO:0098794">
    <property type="term" value="C:postsynapse"/>
    <property type="evidence" value="ECO:0007669"/>
    <property type="project" value="Ensembl"/>
</dbReference>
<dbReference type="GO" id="GO:1990904">
    <property type="term" value="C:ribonucleoprotein complex"/>
    <property type="evidence" value="ECO:0000314"/>
    <property type="project" value="MGI"/>
</dbReference>
<dbReference type="GO" id="GO:0016442">
    <property type="term" value="C:RISC complex"/>
    <property type="evidence" value="ECO:0000314"/>
    <property type="project" value="BHF-UCL"/>
</dbReference>
<dbReference type="GO" id="GO:0070578">
    <property type="term" value="C:RISC-loading complex"/>
    <property type="evidence" value="ECO:0000314"/>
    <property type="project" value="BHF-UCL"/>
</dbReference>
<dbReference type="GO" id="GO:0001046">
    <property type="term" value="F:core promoter sequence-specific DNA binding"/>
    <property type="evidence" value="ECO:0007669"/>
    <property type="project" value="Ensembl"/>
</dbReference>
<dbReference type="GO" id="GO:0003725">
    <property type="term" value="F:double-stranded RNA binding"/>
    <property type="evidence" value="ECO:0007669"/>
    <property type="project" value="Ensembl"/>
</dbReference>
<dbReference type="GO" id="GO:0090624">
    <property type="term" value="F:endoribonuclease activity, cleaving miRNA-paired mRNA"/>
    <property type="evidence" value="ECO:0007669"/>
    <property type="project" value="Ensembl"/>
</dbReference>
<dbReference type="GO" id="GO:0070551">
    <property type="term" value="F:endoribonuclease activity, cleaving siRNA-paired mRNA"/>
    <property type="evidence" value="ECO:0000250"/>
    <property type="project" value="UniProtKB"/>
</dbReference>
<dbReference type="GO" id="GO:0046872">
    <property type="term" value="F:metal ion binding"/>
    <property type="evidence" value="ECO:0007669"/>
    <property type="project" value="UniProtKB-KW"/>
</dbReference>
<dbReference type="GO" id="GO:0035198">
    <property type="term" value="F:miRNA binding"/>
    <property type="evidence" value="ECO:0000314"/>
    <property type="project" value="MGI"/>
</dbReference>
<dbReference type="GO" id="GO:0035925">
    <property type="term" value="F:mRNA 3'-UTR AU-rich region binding"/>
    <property type="evidence" value="ECO:0007669"/>
    <property type="project" value="Ensembl"/>
</dbReference>
<dbReference type="GO" id="GO:0003729">
    <property type="term" value="F:mRNA binding"/>
    <property type="evidence" value="ECO:0000314"/>
    <property type="project" value="MGI"/>
</dbReference>
<dbReference type="GO" id="GO:0098808">
    <property type="term" value="F:mRNA cap binding"/>
    <property type="evidence" value="ECO:0000250"/>
    <property type="project" value="UniProtKB"/>
</dbReference>
<dbReference type="GO" id="GO:0000340">
    <property type="term" value="F:RNA 7-methylguanosine cap binding"/>
    <property type="evidence" value="ECO:0000250"/>
    <property type="project" value="UniProtKB"/>
</dbReference>
<dbReference type="GO" id="GO:0003723">
    <property type="term" value="F:RNA binding"/>
    <property type="evidence" value="ECO:0000314"/>
    <property type="project" value="MGI"/>
</dbReference>
<dbReference type="GO" id="GO:0004521">
    <property type="term" value="F:RNA endonuclease activity"/>
    <property type="evidence" value="ECO:0000314"/>
    <property type="project" value="MGI"/>
</dbReference>
<dbReference type="GO" id="GO:0000993">
    <property type="term" value="F:RNA polymerase II complex binding"/>
    <property type="evidence" value="ECO:0007669"/>
    <property type="project" value="Ensembl"/>
</dbReference>
<dbReference type="GO" id="GO:0003727">
    <property type="term" value="F:single-stranded RNA binding"/>
    <property type="evidence" value="ECO:0007669"/>
    <property type="project" value="Ensembl"/>
</dbReference>
<dbReference type="GO" id="GO:0035197">
    <property type="term" value="F:siRNA binding"/>
    <property type="evidence" value="ECO:0000250"/>
    <property type="project" value="UniProtKB"/>
</dbReference>
<dbReference type="GO" id="GO:0030154">
    <property type="term" value="P:cell differentiation"/>
    <property type="evidence" value="ECO:0007669"/>
    <property type="project" value="UniProtKB-KW"/>
</dbReference>
<dbReference type="GO" id="GO:0010467">
    <property type="term" value="P:gene expression"/>
    <property type="evidence" value="ECO:0000315"/>
    <property type="project" value="MGI"/>
</dbReference>
<dbReference type="GO" id="GO:0010586">
    <property type="term" value="P:miRNA metabolic process"/>
    <property type="evidence" value="ECO:0000314"/>
    <property type="project" value="MGI"/>
</dbReference>
<dbReference type="GO" id="GO:0035196">
    <property type="term" value="P:miRNA processing"/>
    <property type="evidence" value="ECO:0000315"/>
    <property type="project" value="MGI"/>
</dbReference>
<dbReference type="GO" id="GO:0035278">
    <property type="term" value="P:miRNA-mediated gene silencing by inhibition of translation"/>
    <property type="evidence" value="ECO:0000250"/>
    <property type="project" value="UniProtKB"/>
</dbReference>
<dbReference type="GO" id="GO:0035279">
    <property type="term" value="P:miRNA-mediated gene silencing by mRNA destabilization"/>
    <property type="evidence" value="ECO:0000314"/>
    <property type="project" value="BHF-UCL"/>
</dbReference>
<dbReference type="GO" id="GO:0045947">
    <property type="term" value="P:negative regulation of translational initiation"/>
    <property type="evidence" value="ECO:0000250"/>
    <property type="project" value="UniProtKB"/>
</dbReference>
<dbReference type="GO" id="GO:0033962">
    <property type="term" value="P:P-body assembly"/>
    <property type="evidence" value="ECO:0007669"/>
    <property type="project" value="Ensembl"/>
</dbReference>
<dbReference type="GO" id="GO:0045766">
    <property type="term" value="P:positive regulation of angiogenesis"/>
    <property type="evidence" value="ECO:0007669"/>
    <property type="project" value="Ensembl"/>
</dbReference>
<dbReference type="GO" id="GO:0010628">
    <property type="term" value="P:positive regulation of gene expression"/>
    <property type="evidence" value="ECO:0000315"/>
    <property type="project" value="MGI"/>
</dbReference>
<dbReference type="GO" id="GO:1900153">
    <property type="term" value="P:positive regulation of nuclear-transcribed mRNA catabolic process, deadenylation-dependent decay"/>
    <property type="evidence" value="ECO:0000315"/>
    <property type="project" value="UniProtKB"/>
</dbReference>
<dbReference type="GO" id="GO:0060213">
    <property type="term" value="P:positive regulation of nuclear-transcribed mRNA poly(A) tail shortening"/>
    <property type="evidence" value="ECO:0000315"/>
    <property type="project" value="UniProtKB"/>
</dbReference>
<dbReference type="GO" id="GO:0045944">
    <property type="term" value="P:positive regulation of transcription by RNA polymerase II"/>
    <property type="evidence" value="ECO:0007669"/>
    <property type="project" value="Ensembl"/>
</dbReference>
<dbReference type="GO" id="GO:0045727">
    <property type="term" value="P:positive regulation of translation"/>
    <property type="evidence" value="ECO:0007669"/>
    <property type="project" value="Ensembl"/>
</dbReference>
<dbReference type="GO" id="GO:1901165">
    <property type="term" value="P:positive regulation of trophoblast cell migration"/>
    <property type="evidence" value="ECO:0007669"/>
    <property type="project" value="Ensembl"/>
</dbReference>
<dbReference type="GO" id="GO:0009791">
    <property type="term" value="P:post-embryonic development"/>
    <property type="evidence" value="ECO:0000315"/>
    <property type="project" value="MGI"/>
</dbReference>
<dbReference type="GO" id="GO:0031054">
    <property type="term" value="P:pre-miRNA processing"/>
    <property type="evidence" value="ECO:0000314"/>
    <property type="project" value="BHF-UCL"/>
</dbReference>
<dbReference type="GO" id="GO:0090128">
    <property type="term" value="P:regulation of synapse maturation"/>
    <property type="evidence" value="ECO:0007669"/>
    <property type="project" value="Ensembl"/>
</dbReference>
<dbReference type="GO" id="GO:0031047">
    <property type="term" value="P:regulatory ncRNA-mediated gene silencing"/>
    <property type="evidence" value="ECO:0000315"/>
    <property type="project" value="UniProtKB"/>
</dbReference>
<dbReference type="GO" id="GO:0070922">
    <property type="term" value="P:RISC complex assembly"/>
    <property type="evidence" value="ECO:0000266"/>
    <property type="project" value="ComplexPortal"/>
</dbReference>
<dbReference type="GO" id="GO:0043489">
    <property type="term" value="P:RNA stabilization"/>
    <property type="evidence" value="ECO:0000315"/>
    <property type="project" value="MGI"/>
</dbReference>
<dbReference type="GO" id="GO:0030422">
    <property type="term" value="P:siRNA processing"/>
    <property type="evidence" value="ECO:0000266"/>
    <property type="project" value="ComplexPortal"/>
</dbReference>
<dbReference type="GO" id="GO:0090625">
    <property type="term" value="P:siRNA-mediated gene silencing by mRNA destabilization"/>
    <property type="evidence" value="ECO:0007669"/>
    <property type="project" value="Ensembl"/>
</dbReference>
<dbReference type="CDD" id="cd02846">
    <property type="entry name" value="PAZ_argonaute_like"/>
    <property type="match status" value="1"/>
</dbReference>
<dbReference type="CDD" id="cd04657">
    <property type="entry name" value="Piwi_ago-like"/>
    <property type="match status" value="1"/>
</dbReference>
<dbReference type="FunFam" id="2.170.260.10:FF:000001">
    <property type="entry name" value="Protein argonaute-2"/>
    <property type="match status" value="1"/>
</dbReference>
<dbReference type="FunFam" id="3.30.420.10:FF:000001">
    <property type="entry name" value="Protein argonaute-2"/>
    <property type="match status" value="1"/>
</dbReference>
<dbReference type="FunFam" id="3.40.50.2300:FF:000005">
    <property type="entry name" value="Protein argonaute-2"/>
    <property type="match status" value="1"/>
</dbReference>
<dbReference type="Gene3D" id="3.40.50.2300">
    <property type="match status" value="1"/>
</dbReference>
<dbReference type="Gene3D" id="2.170.260.10">
    <property type="entry name" value="paz domain"/>
    <property type="match status" value="1"/>
</dbReference>
<dbReference type="Gene3D" id="3.30.420.10">
    <property type="entry name" value="Ribonuclease H-like superfamily/Ribonuclease H"/>
    <property type="match status" value="1"/>
</dbReference>
<dbReference type="HAMAP" id="MF_03031">
    <property type="entry name" value="AGO2"/>
    <property type="match status" value="1"/>
</dbReference>
<dbReference type="InterPro" id="IPR028602">
    <property type="entry name" value="AGO2"/>
</dbReference>
<dbReference type="InterPro" id="IPR014811">
    <property type="entry name" value="ArgoL1"/>
</dbReference>
<dbReference type="InterPro" id="IPR032472">
    <property type="entry name" value="ArgoL2"/>
</dbReference>
<dbReference type="InterPro" id="IPR032473">
    <property type="entry name" value="Argonaute_Mid_dom"/>
</dbReference>
<dbReference type="InterPro" id="IPR032474">
    <property type="entry name" value="Argonaute_N"/>
</dbReference>
<dbReference type="InterPro" id="IPR003100">
    <property type="entry name" value="PAZ_dom"/>
</dbReference>
<dbReference type="InterPro" id="IPR036085">
    <property type="entry name" value="PAZ_dom_sf"/>
</dbReference>
<dbReference type="InterPro" id="IPR003165">
    <property type="entry name" value="Piwi"/>
</dbReference>
<dbReference type="InterPro" id="IPR045246">
    <property type="entry name" value="Piwi_ago-like"/>
</dbReference>
<dbReference type="InterPro" id="IPR012337">
    <property type="entry name" value="RNaseH-like_sf"/>
</dbReference>
<dbReference type="InterPro" id="IPR036397">
    <property type="entry name" value="RNaseH_sf"/>
</dbReference>
<dbReference type="PANTHER" id="PTHR22891">
    <property type="entry name" value="EUKARYOTIC TRANSLATION INITIATION FACTOR 2C"/>
    <property type="match status" value="1"/>
</dbReference>
<dbReference type="Pfam" id="PF08699">
    <property type="entry name" value="ArgoL1"/>
    <property type="match status" value="1"/>
</dbReference>
<dbReference type="Pfam" id="PF16488">
    <property type="entry name" value="ArgoL2"/>
    <property type="match status" value="1"/>
</dbReference>
<dbReference type="Pfam" id="PF16487">
    <property type="entry name" value="ArgoMid"/>
    <property type="match status" value="1"/>
</dbReference>
<dbReference type="Pfam" id="PF16486">
    <property type="entry name" value="ArgoN"/>
    <property type="match status" value="1"/>
</dbReference>
<dbReference type="Pfam" id="PF02170">
    <property type="entry name" value="PAZ"/>
    <property type="match status" value="1"/>
</dbReference>
<dbReference type="Pfam" id="PF02171">
    <property type="entry name" value="Piwi"/>
    <property type="match status" value="1"/>
</dbReference>
<dbReference type="SMART" id="SM01163">
    <property type="entry name" value="DUF1785"/>
    <property type="match status" value="1"/>
</dbReference>
<dbReference type="SMART" id="SM00949">
    <property type="entry name" value="PAZ"/>
    <property type="match status" value="1"/>
</dbReference>
<dbReference type="SMART" id="SM00950">
    <property type="entry name" value="Piwi"/>
    <property type="match status" value="1"/>
</dbReference>
<dbReference type="SUPFAM" id="SSF101690">
    <property type="entry name" value="PAZ domain"/>
    <property type="match status" value="1"/>
</dbReference>
<dbReference type="SUPFAM" id="SSF53098">
    <property type="entry name" value="Ribonuclease H-like"/>
    <property type="match status" value="1"/>
</dbReference>
<dbReference type="PROSITE" id="PS50821">
    <property type="entry name" value="PAZ"/>
    <property type="match status" value="1"/>
</dbReference>
<dbReference type="PROSITE" id="PS50822">
    <property type="entry name" value="PIWI"/>
    <property type="match status" value="1"/>
</dbReference>
<evidence type="ECO:0000250" key="1"/>
<evidence type="ECO:0000250" key="2">
    <source>
        <dbReference type="UniProtKB" id="Q9UKV8"/>
    </source>
</evidence>
<evidence type="ECO:0000255" key="3"/>
<evidence type="ECO:0000255" key="4">
    <source>
        <dbReference type="HAMAP-Rule" id="MF_03031"/>
    </source>
</evidence>
<evidence type="ECO:0000255" key="5">
    <source>
        <dbReference type="PROSITE-ProRule" id="PRU00142"/>
    </source>
</evidence>
<evidence type="ECO:0000269" key="6">
    <source>
    </source>
</evidence>
<evidence type="ECO:0000269" key="7">
    <source>
    </source>
</evidence>
<evidence type="ECO:0000269" key="8">
    <source>
    </source>
</evidence>
<evidence type="ECO:0000269" key="9">
    <source>
    </source>
</evidence>
<evidence type="ECO:0000269" key="10">
    <source>
    </source>
</evidence>
<evidence type="ECO:0000269" key="11">
    <source>
    </source>
</evidence>
<evidence type="ECO:0000269" key="12">
    <source>
    </source>
</evidence>
<evidence type="ECO:0000269" key="13">
    <source>
    </source>
</evidence>
<evidence type="ECO:0000269" key="14">
    <source>
    </source>
</evidence>
<evidence type="ECO:0000269" key="15">
    <source>
    </source>
</evidence>
<evidence type="ECO:0000305" key="16"/>
<evidence type="ECO:0007744" key="17">
    <source>
    </source>
</evidence>